<feature type="chain" id="PRO_0000402282" description="Respiratory growth induced protein 1">
    <location>
        <begin position="1"/>
        <end position="157"/>
    </location>
</feature>
<evidence type="ECO:0000250" key="1"/>
<evidence type="ECO:0000305" key="2"/>
<dbReference type="EMBL" id="CR380956">
    <property type="protein sequence ID" value="CAG60787.1"/>
    <property type="molecule type" value="Genomic_DNA"/>
</dbReference>
<dbReference type="RefSeq" id="XP_447838.1">
    <property type="nucleotide sequence ID" value="XM_447838.1"/>
</dbReference>
<dbReference type="SMR" id="Q6FPK6"/>
<dbReference type="FunCoup" id="Q6FPK6">
    <property type="interactions" value="69"/>
</dbReference>
<dbReference type="STRING" id="284593.Q6FPK6"/>
<dbReference type="EnsemblFungi" id="CAGL0J03080g-T">
    <property type="protein sequence ID" value="CAGL0J03080g-T-p1"/>
    <property type="gene ID" value="CAGL0J03080g"/>
</dbReference>
<dbReference type="KEGG" id="cgr:2889725"/>
<dbReference type="CGD" id="CAL0129589">
    <property type="gene designation" value="CAGL0J03080g"/>
</dbReference>
<dbReference type="VEuPathDB" id="FungiDB:B1J91_J03080g"/>
<dbReference type="VEuPathDB" id="FungiDB:CAGL0J03080g"/>
<dbReference type="eggNOG" id="ENOG502RZ9F">
    <property type="taxonomic scope" value="Eukaryota"/>
</dbReference>
<dbReference type="HOGENOM" id="CLU_118207_0_0_1"/>
<dbReference type="InParanoid" id="Q6FPK6"/>
<dbReference type="OMA" id="HLKYYPP"/>
<dbReference type="Proteomes" id="UP000002428">
    <property type="component" value="Chromosome J"/>
</dbReference>
<dbReference type="GO" id="GO:0005886">
    <property type="term" value="C:plasma membrane"/>
    <property type="evidence" value="ECO:0007669"/>
    <property type="project" value="UniProtKB-SubCell"/>
</dbReference>
<dbReference type="GO" id="GO:0006112">
    <property type="term" value="P:energy reserve metabolic process"/>
    <property type="evidence" value="ECO:0007669"/>
    <property type="project" value="EnsemblFungi"/>
</dbReference>
<dbReference type="Gene3D" id="3.40.1000.40">
    <property type="entry name" value="Respiratory growth induced protein 1"/>
    <property type="match status" value="1"/>
</dbReference>
<dbReference type="InterPro" id="IPR022554">
    <property type="entry name" value="RGI1"/>
</dbReference>
<dbReference type="InterPro" id="IPR038235">
    <property type="entry name" value="RGI1_sf"/>
</dbReference>
<dbReference type="Pfam" id="PF10843">
    <property type="entry name" value="RGI1"/>
    <property type="match status" value="1"/>
</dbReference>
<protein>
    <recommendedName>
        <fullName>Respiratory growth induced protein 1</fullName>
    </recommendedName>
</protein>
<sequence length="157" mass="18893">MAKKDKKPKVNTIVTKDGESLKVFEDLNDFEMFIKNETEDEEFDHIHCKLTYYPPFVLHESHDDPEKIKDTNNSHNKKFVRHLHQHVEKHLLKDIKEALHKPELKFHDKSKDETFEHIVWHYGEETEYHDRKFRIQVTVTCNHDDAMVDVDYKTIPL</sequence>
<proteinExistence type="inferred from homology"/>
<accession>Q6FPK6</accession>
<keyword id="KW-1003">Cell membrane</keyword>
<keyword id="KW-0472">Membrane</keyword>
<keyword id="KW-1185">Reference proteome</keyword>
<name>RGI1_CANGA</name>
<organism>
    <name type="scientific">Candida glabrata (strain ATCC 2001 / BCRC 20586 / JCM 3761 / NBRC 0622 / NRRL Y-65 / CBS 138)</name>
    <name type="common">Yeast</name>
    <name type="synonym">Nakaseomyces glabratus</name>
    <dbReference type="NCBI Taxonomy" id="284593"/>
    <lineage>
        <taxon>Eukaryota</taxon>
        <taxon>Fungi</taxon>
        <taxon>Dikarya</taxon>
        <taxon>Ascomycota</taxon>
        <taxon>Saccharomycotina</taxon>
        <taxon>Saccharomycetes</taxon>
        <taxon>Saccharomycetales</taxon>
        <taxon>Saccharomycetaceae</taxon>
        <taxon>Nakaseomyces</taxon>
    </lineage>
</organism>
<gene>
    <name type="primary">RGI1</name>
    <name type="ordered locus">CAGL0J03080g</name>
</gene>
<comment type="function">
    <text evidence="1">Involved in the control of energetic metabolism and significantly contribute to cell fitness, especially under respiratory growth conditions.</text>
</comment>
<comment type="subcellular location">
    <subcellularLocation>
        <location evidence="1">Cell membrane</location>
        <topology evidence="1">Peripheral membrane protein</topology>
    </subcellularLocation>
</comment>
<comment type="similarity">
    <text evidence="2">Belongs to the RGI1 family.</text>
</comment>
<reference key="1">
    <citation type="journal article" date="2004" name="Nature">
        <title>Genome evolution in yeasts.</title>
        <authorList>
            <person name="Dujon B."/>
            <person name="Sherman D."/>
            <person name="Fischer G."/>
            <person name="Durrens P."/>
            <person name="Casaregola S."/>
            <person name="Lafontaine I."/>
            <person name="de Montigny J."/>
            <person name="Marck C."/>
            <person name="Neuveglise C."/>
            <person name="Talla E."/>
            <person name="Goffard N."/>
            <person name="Frangeul L."/>
            <person name="Aigle M."/>
            <person name="Anthouard V."/>
            <person name="Babour A."/>
            <person name="Barbe V."/>
            <person name="Barnay S."/>
            <person name="Blanchin S."/>
            <person name="Beckerich J.-M."/>
            <person name="Beyne E."/>
            <person name="Bleykasten C."/>
            <person name="Boisrame A."/>
            <person name="Boyer J."/>
            <person name="Cattolico L."/>
            <person name="Confanioleri F."/>
            <person name="de Daruvar A."/>
            <person name="Despons L."/>
            <person name="Fabre E."/>
            <person name="Fairhead C."/>
            <person name="Ferry-Dumazet H."/>
            <person name="Groppi A."/>
            <person name="Hantraye F."/>
            <person name="Hennequin C."/>
            <person name="Jauniaux N."/>
            <person name="Joyet P."/>
            <person name="Kachouri R."/>
            <person name="Kerrest A."/>
            <person name="Koszul R."/>
            <person name="Lemaire M."/>
            <person name="Lesur I."/>
            <person name="Ma L."/>
            <person name="Muller H."/>
            <person name="Nicaud J.-M."/>
            <person name="Nikolski M."/>
            <person name="Oztas S."/>
            <person name="Ozier-Kalogeropoulos O."/>
            <person name="Pellenz S."/>
            <person name="Potier S."/>
            <person name="Richard G.-F."/>
            <person name="Straub M.-L."/>
            <person name="Suleau A."/>
            <person name="Swennen D."/>
            <person name="Tekaia F."/>
            <person name="Wesolowski-Louvel M."/>
            <person name="Westhof E."/>
            <person name="Wirth B."/>
            <person name="Zeniou-Meyer M."/>
            <person name="Zivanovic Y."/>
            <person name="Bolotin-Fukuhara M."/>
            <person name="Thierry A."/>
            <person name="Bouchier C."/>
            <person name="Caudron B."/>
            <person name="Scarpelli C."/>
            <person name="Gaillardin C."/>
            <person name="Weissenbach J."/>
            <person name="Wincker P."/>
            <person name="Souciet J.-L."/>
        </authorList>
    </citation>
    <scope>NUCLEOTIDE SEQUENCE [LARGE SCALE GENOMIC DNA]</scope>
    <source>
        <strain>ATCC 2001 / BCRC 20586 / JCM 3761 / NBRC 0622 / NRRL Y-65 / CBS 138</strain>
    </source>
</reference>